<sequence length="388" mass="43629">MTKHIKILVIGVGVAGPAVAYWLKRFGFSPVLIEKSAAVRKGGQALDIRGIATHIAKEMGIYDQICNMRTQIKCGRYVDVKGNVLHEEQGETFGFRQDDEVEILRGDLVEILMKAIADIPCEFKQSVIKIEQNEDSVTVTYKDGRVENYDLVIAADGIHSATRGMVFSKNEYQLINLGSYVSAFTIPNYLGLDHMELLCESNHKLVTLQSDSQADKAMAGFMFRSKHVLEDIRDEQEQKHFLHASFQNFGWETQNILNRMPESDDFYFDAITQIKMKSWTKGRIALIGDAAYCPSPLSGQGNNLAFVGAYILAGELKKADGDYIQAFTRYNELLHPFVEANQQFGVWVSESFLLKDDEVSKEIAEARSNKILAMIKSVSNSINLPQYE</sequence>
<organism>
    <name type="scientific">Unknown prokaryotic organism</name>
    <dbReference type="NCBI Taxonomy" id="2725"/>
    <lineage>
        <taxon>Bacteria</taxon>
        <taxon>environmental samples</taxon>
    </lineage>
</organism>
<dbReference type="EC" id="1.14.13.-" evidence="7"/>
<dbReference type="EMBL" id="KJ694463">
    <property type="protein sequence ID" value="AIA15133.1"/>
    <property type="molecule type" value="Genomic_DNA"/>
</dbReference>
<dbReference type="EMBL" id="KR857684">
    <property type="protein sequence ID" value="AKQ05894.1"/>
    <property type="molecule type" value="Genomic_DNA"/>
</dbReference>
<dbReference type="PDB" id="5TUE">
    <property type="method" value="X-ray"/>
    <property type="resolution" value="2.10 A"/>
    <property type="chains" value="A/B=1-388"/>
</dbReference>
<dbReference type="PDB" id="5TUF">
    <property type="method" value="X-ray"/>
    <property type="resolution" value="2.25 A"/>
    <property type="chains" value="A/B=1-388"/>
</dbReference>
<dbReference type="PDB" id="5TUI">
    <property type="method" value="X-ray"/>
    <property type="resolution" value="1.75 A"/>
    <property type="chains" value="A/B=1-388"/>
</dbReference>
<dbReference type="PDBsum" id="5TUE"/>
<dbReference type="PDBsum" id="5TUF"/>
<dbReference type="PDBsum" id="5TUI"/>
<dbReference type="SMR" id="A0A059WYP6"/>
<dbReference type="CARD" id="ARO:3004584">
    <property type="molecule name" value="tet(50)"/>
    <property type="mechanism identifier" value="ARO:0001004"/>
    <property type="mechanism name" value="antibiotic inactivation"/>
</dbReference>
<dbReference type="GO" id="GO:0071949">
    <property type="term" value="F:FAD binding"/>
    <property type="evidence" value="ECO:0007669"/>
    <property type="project" value="InterPro"/>
</dbReference>
<dbReference type="GO" id="GO:0016491">
    <property type="term" value="F:oxidoreductase activity"/>
    <property type="evidence" value="ECO:0007669"/>
    <property type="project" value="UniProtKB-KW"/>
</dbReference>
<dbReference type="GO" id="GO:0046677">
    <property type="term" value="P:response to antibiotic"/>
    <property type="evidence" value="ECO:0007669"/>
    <property type="project" value="UniProtKB-KW"/>
</dbReference>
<dbReference type="Gene3D" id="3.30.9.10">
    <property type="entry name" value="D-Amino Acid Oxidase, subunit A, domain 2"/>
    <property type="match status" value="1"/>
</dbReference>
<dbReference type="Gene3D" id="3.50.50.60">
    <property type="entry name" value="FAD/NAD(P)-binding domain"/>
    <property type="match status" value="1"/>
</dbReference>
<dbReference type="InterPro" id="IPR002938">
    <property type="entry name" value="FAD-bd"/>
</dbReference>
<dbReference type="InterPro" id="IPR036188">
    <property type="entry name" value="FAD/NAD-bd_sf"/>
</dbReference>
<dbReference type="InterPro" id="IPR051704">
    <property type="entry name" value="FAD_aromatic-hydroxylase"/>
</dbReference>
<dbReference type="NCBIfam" id="NF033476">
    <property type="entry name" value="tet_destruct"/>
    <property type="match status" value="1"/>
</dbReference>
<dbReference type="PANTHER" id="PTHR46865:SF2">
    <property type="entry name" value="MONOOXYGENASE"/>
    <property type="match status" value="1"/>
</dbReference>
<dbReference type="PANTHER" id="PTHR46865">
    <property type="entry name" value="OXIDOREDUCTASE-RELATED"/>
    <property type="match status" value="1"/>
</dbReference>
<dbReference type="Pfam" id="PF01494">
    <property type="entry name" value="FAD_binding_3"/>
    <property type="match status" value="1"/>
</dbReference>
<dbReference type="PRINTS" id="PR00420">
    <property type="entry name" value="RNGMNOXGNASE"/>
</dbReference>
<dbReference type="SUPFAM" id="SSF51905">
    <property type="entry name" value="FAD/NAD(P)-binding domain"/>
    <property type="match status" value="1"/>
</dbReference>
<proteinExistence type="evidence at protein level"/>
<accession>A0A059WYP6</accession>
<protein>
    <recommendedName>
        <fullName evidence="5">Flavin-dependent monooxygenase</fullName>
    </recommendedName>
    <alternativeName>
        <fullName evidence="4">Tetracycline destructase Tet(50)</fullName>
        <shortName>Tet(50)</shortName>
        <ecNumber evidence="7">1.14.13.-</ecNumber>
    </alternativeName>
</protein>
<name>TET50_UNKP</name>
<feature type="chain" id="PRO_0000448491" description="Flavin-dependent monooxygenase">
    <location>
        <begin position="1"/>
        <end position="388"/>
    </location>
</feature>
<feature type="binding site" evidence="9 10 11">
    <location>
        <begin position="12"/>
        <end position="15"/>
    </location>
    <ligand>
        <name>FAD</name>
        <dbReference type="ChEBI" id="CHEBI:57692"/>
    </ligand>
</feature>
<feature type="binding site" evidence="9 10 11">
    <location>
        <begin position="34"/>
        <end position="36"/>
    </location>
    <ligand>
        <name>FAD</name>
        <dbReference type="ChEBI" id="CHEBI:57692"/>
    </ligand>
</feature>
<feature type="binding site" evidence="9 10 11">
    <location>
        <begin position="44"/>
        <end position="47"/>
    </location>
    <ligand>
        <name>FAD</name>
        <dbReference type="ChEBI" id="CHEBI:57692"/>
    </ligand>
</feature>
<feature type="binding site" evidence="9 10 11">
    <location>
        <position position="105"/>
    </location>
    <ligand>
        <name>FAD</name>
        <dbReference type="ChEBI" id="CHEBI:57692"/>
    </ligand>
</feature>
<feature type="binding site" evidence="9 10">
    <location>
        <position position="267"/>
    </location>
    <ligand>
        <name>FAD</name>
        <dbReference type="ChEBI" id="CHEBI:57692"/>
    </ligand>
</feature>
<feature type="binding site" evidence="9 10 11">
    <location>
        <position position="289"/>
    </location>
    <ligand>
        <name>FAD</name>
        <dbReference type="ChEBI" id="CHEBI:57692"/>
    </ligand>
</feature>
<feature type="binding site" evidence="9 10 11">
    <location>
        <begin position="296"/>
        <end position="302"/>
    </location>
    <ligand>
        <name>FAD</name>
        <dbReference type="ChEBI" id="CHEBI:57692"/>
    </ligand>
</feature>
<feature type="helix" evidence="12">
    <location>
        <begin position="2"/>
        <end position="4"/>
    </location>
</feature>
<feature type="strand" evidence="12">
    <location>
        <begin position="6"/>
        <end position="10"/>
    </location>
</feature>
<feature type="strand" evidence="12">
    <location>
        <begin position="12"/>
        <end position="14"/>
    </location>
</feature>
<feature type="helix" evidence="12">
    <location>
        <begin position="15"/>
        <end position="25"/>
    </location>
</feature>
<feature type="strand" evidence="12">
    <location>
        <begin position="29"/>
        <end position="33"/>
    </location>
</feature>
<feature type="strand" evidence="12">
    <location>
        <begin position="35"/>
        <end position="38"/>
    </location>
</feature>
<feature type="strand" evidence="12">
    <location>
        <begin position="44"/>
        <end position="48"/>
    </location>
</feature>
<feature type="helix" evidence="12">
    <location>
        <begin position="51"/>
        <end position="58"/>
    </location>
</feature>
<feature type="helix" evidence="12">
    <location>
        <begin position="62"/>
        <end position="67"/>
    </location>
</feature>
<feature type="strand" evidence="12">
    <location>
        <begin position="74"/>
        <end position="78"/>
    </location>
</feature>
<feature type="strand" evidence="12">
    <location>
        <begin position="84"/>
        <end position="89"/>
    </location>
</feature>
<feature type="helix" evidence="12">
    <location>
        <begin position="90"/>
        <end position="93"/>
    </location>
</feature>
<feature type="strand" evidence="12">
    <location>
        <begin position="101"/>
        <end position="104"/>
    </location>
</feature>
<feature type="helix" evidence="12">
    <location>
        <begin position="105"/>
        <end position="115"/>
    </location>
</feature>
<feature type="turn" evidence="12">
    <location>
        <begin position="116"/>
        <end position="118"/>
    </location>
</feature>
<feature type="strand" evidence="12">
    <location>
        <begin position="121"/>
        <end position="124"/>
    </location>
</feature>
<feature type="strand" evidence="12">
    <location>
        <begin position="127"/>
        <end position="132"/>
    </location>
</feature>
<feature type="strand" evidence="12">
    <location>
        <begin position="137"/>
        <end position="141"/>
    </location>
</feature>
<feature type="strand" evidence="12">
    <location>
        <begin position="146"/>
        <end position="154"/>
    </location>
</feature>
<feature type="helix" evidence="12">
    <location>
        <begin position="161"/>
        <end position="166"/>
    </location>
</feature>
<feature type="helix" evidence="12">
    <location>
        <begin position="169"/>
        <end position="171"/>
    </location>
</feature>
<feature type="strand" evidence="12">
    <location>
        <begin position="173"/>
        <end position="187"/>
    </location>
</feature>
<feature type="strand" evidence="12">
    <location>
        <begin position="194"/>
        <end position="200"/>
    </location>
</feature>
<feature type="strand" evidence="12">
    <location>
        <begin position="202"/>
        <end position="210"/>
    </location>
</feature>
<feature type="strand" evidence="12">
    <location>
        <begin position="216"/>
        <end position="224"/>
    </location>
</feature>
<feature type="helix" evidence="12">
    <location>
        <begin position="235"/>
        <end position="246"/>
    </location>
</feature>
<feature type="helix" evidence="12">
    <location>
        <begin position="253"/>
        <end position="258"/>
    </location>
</feature>
<feature type="helix" evidence="12">
    <location>
        <begin position="259"/>
        <end position="262"/>
    </location>
</feature>
<feature type="strand" evidence="12">
    <location>
        <begin position="267"/>
        <end position="275"/>
    </location>
</feature>
<feature type="strand" evidence="12">
    <location>
        <begin position="279"/>
        <end position="281"/>
    </location>
</feature>
<feature type="strand" evidence="12">
    <location>
        <begin position="284"/>
        <end position="286"/>
    </location>
</feature>
<feature type="helix" evidence="12">
    <location>
        <begin position="289"/>
        <end position="292"/>
    </location>
</feature>
<feature type="turn" evidence="12">
    <location>
        <begin position="296"/>
        <end position="298"/>
    </location>
</feature>
<feature type="helix" evidence="12">
    <location>
        <begin position="301"/>
        <end position="318"/>
    </location>
</feature>
<feature type="turn" evidence="12">
    <location>
        <begin position="319"/>
        <end position="321"/>
    </location>
</feature>
<feature type="helix" evidence="12">
    <location>
        <begin position="323"/>
        <end position="351"/>
    </location>
</feature>
<feature type="strand" evidence="12">
    <location>
        <begin position="355"/>
        <end position="357"/>
    </location>
</feature>
<feature type="helix" evidence="12">
    <location>
        <begin position="361"/>
        <end position="379"/>
    </location>
</feature>
<gene>
    <name type="primary">tet(50)</name>
</gene>
<reference key="1">
    <citation type="journal article" date="2014" name="Nature">
        <title>Bacterial phylogeny structures soil resistomes across habitats.</title>
        <authorList>
            <person name="Forsberg K.J."/>
            <person name="Patel S."/>
            <person name="Gibson M.K."/>
            <person name="Lauber C.L."/>
            <person name="Knight R."/>
            <person name="Fierer N."/>
            <person name="Dantas G."/>
        </authorList>
    </citation>
    <scope>NUCLEOTIDE SEQUENCE [GENOMIC DNA]</scope>
</reference>
<reference key="2">
    <citation type="journal article" date="2015" name="Chem. Biol.">
        <title>The Tetracycline Destructases: A Novel Family of Tetracycline-Inactivating Enzymes.</title>
        <authorList>
            <person name="Forsberg K.J."/>
            <person name="Patel S."/>
            <person name="Wencewicz T.A."/>
            <person name="Dantas G."/>
        </authorList>
    </citation>
    <scope>NUCLEOTIDE SEQUENCE [GENOMIC DNA]</scope>
    <scope>FUNCTION IN INACTIVATING TETRACYCLINE</scope>
    <scope>ANTIBIOTIC RESISTANCE</scope>
</reference>
<reference evidence="9 10 11" key="3">
    <citation type="journal article" date="2017" name="Nat. Chem. Biol.">
        <title>Plasticity, dynamics, and inhibition of emerging tetracycline resistance enzymes.</title>
        <authorList>
            <person name="Park J."/>
            <person name="Gasparrini A.J."/>
            <person name="Reck M.R."/>
            <person name="Symister C.T."/>
            <person name="Elliott J.L."/>
            <person name="Vogel J.P."/>
            <person name="Wencewicz T.A."/>
            <person name="Dantas G."/>
            <person name="Tolia N.H."/>
        </authorList>
    </citation>
    <scope>X-RAY CRYSTALLOGRAPHY (1.75 ANGSTROMS) IN COMPLEX WITH FAD ALONE AND IN COMPLEX WITH SUBSTRATE AND INHIBITOR</scope>
    <scope>FUNCTION</scope>
    <scope>SUBSTRATE SPECIFICITY</scope>
    <scope>COFACTOR</scope>
    <scope>ACTIVITY REGULATION</scope>
    <scope>BIOPHYSICOCHEMICAL PROPERTIES</scope>
    <scope>DOMAIN</scope>
    <scope>ANTIBIOTIC RESISTANCE</scope>
</reference>
<keyword id="KW-0002">3D-structure</keyword>
<keyword id="KW-0046">Antibiotic resistance</keyword>
<keyword id="KW-0274">FAD</keyword>
<keyword id="KW-0285">Flavoprotein</keyword>
<keyword id="KW-0521">NADP</keyword>
<keyword id="KW-0547">Nucleotide-binding</keyword>
<keyword id="KW-0560">Oxidoreductase</keyword>
<comment type="function">
    <text evidence="2 3">An FAD-requiring monooxygenase active on tetracycline antibiotic and some of its derivatives, which leads to their inactivation (PubMed:26097034). Expression in E.coli confers high resistance to tetracycline and oxytetracycline, does not confer resistance to minocycline or tigecycline. Degrades tetracycline and oxytetracycline; the reaction requires NADPH (PubMed:26097034). Degrades and confers resistance to chlortetracycline (PubMed:28481346).</text>
</comment>
<comment type="catalytic activity">
    <reaction evidence="7 8">
        <text>a tetracycline + NADPH + O2 + H(+) = a (1S,10aS)-3-(CONH2)-1-(Me2N)-3,3a,4,6-(HO)4-2,5-dioxo-1H,10aH,11H,11aH-cyclopenta[b]anthracene + CO + NADP(+) + H2O</text>
        <dbReference type="Rhea" id="RHEA:61564"/>
        <dbReference type="ChEBI" id="CHEBI:15377"/>
        <dbReference type="ChEBI" id="CHEBI:15378"/>
        <dbReference type="ChEBI" id="CHEBI:15379"/>
        <dbReference type="ChEBI" id="CHEBI:17245"/>
        <dbReference type="ChEBI" id="CHEBI:57783"/>
        <dbReference type="ChEBI" id="CHEBI:58349"/>
        <dbReference type="ChEBI" id="CHEBI:144644"/>
        <dbReference type="ChEBI" id="CHEBI:144803"/>
    </reaction>
</comment>
<comment type="catalytic activity">
    <reaction evidence="8">
        <text>7-chlorotetracycline + NADPH + O2 + H(+) = (1S,10S,10aS)-3-(CONH2)-9-Cl-1-(Me2N)-3,3a,4,10-(HO)4-10-Me-2,5-dioxo-1H,10aH,11H,11aH-cyclopenta[b]anthracen-6-olate + CO + NADP(+) + H2O</text>
        <dbReference type="Rhea" id="RHEA:61456"/>
        <dbReference type="ChEBI" id="CHEBI:15377"/>
        <dbReference type="ChEBI" id="CHEBI:15378"/>
        <dbReference type="ChEBI" id="CHEBI:15379"/>
        <dbReference type="ChEBI" id="CHEBI:17245"/>
        <dbReference type="ChEBI" id="CHEBI:57783"/>
        <dbReference type="ChEBI" id="CHEBI:58349"/>
        <dbReference type="ChEBI" id="CHEBI:133598"/>
        <dbReference type="ChEBI" id="CHEBI:144647"/>
    </reaction>
</comment>
<comment type="cofactor">
    <cofactor evidence="3">
        <name>FAD</name>
        <dbReference type="ChEBI" id="CHEBI:57692"/>
    </cofactor>
    <text evidence="3">Binds 1 FAD per subunit; it is seen bound in two conformations.</text>
</comment>
<comment type="activity regulation">
    <text evidence="3">Inhibited by anhydrotetracycline.</text>
</comment>
<comment type="biophysicochemical properties">
    <kinetics>
        <KM evidence="3">17 uM for tetracycline</KM>
        <KM evidence="3">6.3 uM for chlortetracycline</KM>
        <text evidence="3">kcat for tetracycline is 4.3 min(-1), kcat for chlortetracycline is 3.5 min(-1).</text>
    </kinetics>
</comment>
<comment type="domain">
    <text evidence="3">Consists of an N-terminal FAD-binding domain with a Rossman fold, a substrate-binding domain and a C-terminal helix that bridges the 2 domains close to the antibiotic-binding site. This last helix is flexible, is not found in TetX of Bacteroides species, and may contribute to their different substrate specificities (PubMed:28481346). Binds chlortetracycline in a different orientation (180 degrees rotated on its long axis) compared to tetracycline substrate binding to TetX; binding of chlortetracycline alters conformation FAD and the last helix (PubMed:28481346).</text>
</comment>
<comment type="miscellaneous">
    <text evidence="6">Isolated from a grassland soil sample.</text>
</comment>
<comment type="miscellaneous">
    <text evidence="1">Tetracycline antibiotics bind to the ribosomal acceptor site (A-site), preventing binding of the aminoacyl-tRNA to the A-site. The hydrophilic side of tetracycline makes many hydrogen-bonding interactions with oxygen atoms of the ribosome's phosphate backbone.</text>
</comment>
<comment type="similarity">
    <text evidence="5">Belongs to the aromatic-ring hydroxylase family.</text>
</comment>
<evidence type="ECO:0000250" key="1">
    <source>
        <dbReference type="UniProtKB" id="Q93L51"/>
    </source>
</evidence>
<evidence type="ECO:0000269" key="2">
    <source>
    </source>
</evidence>
<evidence type="ECO:0000269" key="3">
    <source>
    </source>
</evidence>
<evidence type="ECO:0000303" key="4">
    <source>
    </source>
</evidence>
<evidence type="ECO:0000305" key="5"/>
<evidence type="ECO:0000305" key="6">
    <source>
    </source>
</evidence>
<evidence type="ECO:0000305" key="7">
    <source>
    </source>
</evidence>
<evidence type="ECO:0000305" key="8">
    <source>
    </source>
</evidence>
<evidence type="ECO:0007744" key="9">
    <source>
        <dbReference type="PDB" id="5TUE"/>
    </source>
</evidence>
<evidence type="ECO:0007744" key="10">
    <source>
        <dbReference type="PDB" id="5TUF"/>
    </source>
</evidence>
<evidence type="ECO:0007744" key="11">
    <source>
        <dbReference type="PDB" id="5TUI"/>
    </source>
</evidence>
<evidence type="ECO:0007829" key="12">
    <source>
        <dbReference type="PDB" id="5TUI"/>
    </source>
</evidence>